<proteinExistence type="inferred from homology"/>
<accession>Q0UK12</accession>
<organism>
    <name type="scientific">Phaeosphaeria nodorum (strain SN15 / ATCC MYA-4574 / FGSC 10173)</name>
    <name type="common">Glume blotch fungus</name>
    <name type="synonym">Parastagonospora nodorum</name>
    <dbReference type="NCBI Taxonomy" id="321614"/>
    <lineage>
        <taxon>Eukaryota</taxon>
        <taxon>Fungi</taxon>
        <taxon>Dikarya</taxon>
        <taxon>Ascomycota</taxon>
        <taxon>Pezizomycotina</taxon>
        <taxon>Dothideomycetes</taxon>
        <taxon>Pleosporomycetidae</taxon>
        <taxon>Pleosporales</taxon>
        <taxon>Pleosporineae</taxon>
        <taxon>Phaeosphaeriaceae</taxon>
        <taxon>Parastagonospora</taxon>
    </lineage>
</organism>
<feature type="chain" id="PRO_0000282698" description="ATP-dependent rRNA helicase RRP3">
    <location>
        <begin position="1"/>
        <end position="546"/>
    </location>
</feature>
<feature type="domain" description="Helicase ATP-binding" evidence="2">
    <location>
        <begin position="146"/>
        <end position="318"/>
    </location>
</feature>
<feature type="domain" description="Helicase C-terminal" evidence="3">
    <location>
        <begin position="342"/>
        <end position="490"/>
    </location>
</feature>
<feature type="region of interest" description="Disordered" evidence="4">
    <location>
        <begin position="1"/>
        <end position="108"/>
    </location>
</feature>
<feature type="region of interest" description="Disordered" evidence="4">
    <location>
        <begin position="504"/>
        <end position="546"/>
    </location>
</feature>
<feature type="short sequence motif" description="Q motif" evidence="5">
    <location>
        <begin position="115"/>
        <end position="143"/>
    </location>
</feature>
<feature type="short sequence motif" description="DEAD box" evidence="5">
    <location>
        <begin position="265"/>
        <end position="268"/>
    </location>
</feature>
<feature type="compositionally biased region" description="Acidic residues" evidence="4">
    <location>
        <begin position="60"/>
        <end position="77"/>
    </location>
</feature>
<feature type="compositionally biased region" description="Acidic residues" evidence="4">
    <location>
        <begin position="94"/>
        <end position="103"/>
    </location>
</feature>
<feature type="compositionally biased region" description="Basic and acidic residues" evidence="4">
    <location>
        <begin position="504"/>
        <end position="515"/>
    </location>
</feature>
<feature type="compositionally biased region" description="Gly residues" evidence="4">
    <location>
        <begin position="519"/>
        <end position="530"/>
    </location>
</feature>
<feature type="compositionally biased region" description="Basic and acidic residues" evidence="4">
    <location>
        <begin position="536"/>
        <end position="546"/>
    </location>
</feature>
<feature type="binding site" evidence="2">
    <location>
        <begin position="159"/>
        <end position="166"/>
    </location>
    <ligand>
        <name>ATP</name>
        <dbReference type="ChEBI" id="CHEBI:30616"/>
    </ligand>
</feature>
<keyword id="KW-0067">ATP-binding</keyword>
<keyword id="KW-0347">Helicase</keyword>
<keyword id="KW-0378">Hydrolase</keyword>
<keyword id="KW-0547">Nucleotide-binding</keyword>
<keyword id="KW-0539">Nucleus</keyword>
<keyword id="KW-0690">Ribosome biogenesis</keyword>
<keyword id="KW-0694">RNA-binding</keyword>
<keyword id="KW-0698">rRNA processing</keyword>
<name>RRP3_PHANO</name>
<gene>
    <name evidence="1" type="primary">RRP3</name>
    <name type="ORF">SNOG_07902</name>
</gene>
<reference key="1">
    <citation type="journal article" date="2007" name="Plant Cell">
        <title>Dothideomycete-plant interactions illuminated by genome sequencing and EST analysis of the wheat pathogen Stagonospora nodorum.</title>
        <authorList>
            <person name="Hane J.K."/>
            <person name="Lowe R.G.T."/>
            <person name="Solomon P.S."/>
            <person name="Tan K.-C."/>
            <person name="Schoch C.L."/>
            <person name="Spatafora J.W."/>
            <person name="Crous P.W."/>
            <person name="Kodira C.D."/>
            <person name="Birren B.W."/>
            <person name="Galagan J.E."/>
            <person name="Torriani S.F.F."/>
            <person name="McDonald B.A."/>
            <person name="Oliver R.P."/>
        </authorList>
    </citation>
    <scope>NUCLEOTIDE SEQUENCE [LARGE SCALE GENOMIC DNA]</scope>
    <source>
        <strain>SN15 / ATCC MYA-4574 / FGSC 10173</strain>
    </source>
</reference>
<protein>
    <recommendedName>
        <fullName evidence="5">ATP-dependent rRNA helicase RRP3</fullName>
        <ecNumber evidence="1">3.6.4.13</ecNumber>
    </recommendedName>
</protein>
<sequence>MSDFKRRKLEGGKSAIDAARERKALKKASAPLKKSHAKPAPSNKPTAKRPPPPSPPQSQSEEDEDEFGGFSGEEEEDVSRAKMTNGSTAKADAEAEQSDEEAEAQAAAAVEAPKKTFADLGVREELCDACENLGYKTATPIQTESIPLALAGKDIIGLAETGSGKTAAFVLPILQALLDKPQAYFGLIMAPTRELAYQISQQVDALGSIINVKCATLVGGMDMVPQAIALSKRPHIIVASPGRLLDHLENTKGFSLKHLKYLVLDEADRLLDLDFGDSLDKIFKVLPRDDRHTYLFSATMSSKVESLQRAALKNPVRVSISSSSHQVVSTLLQSYMLIPHKYKDLYLIHLLNDNIGHATILFTRTVNETQRLAVLLRTLGFQALPLHGQLSQSNRLGALNKFKAKARDILVATDVAARGLDIPSVDLVVNFDLPHDSETYVHRVGRTARAGKSGKAVSFVTQYDLEIFQRIEHALGKQVPEEKVSRDEVMVYAERVGEAQRVAVREMKDLHDQRKSGRGGRGGGRGGGRGGRGRGGRRDNMDMDEG</sequence>
<evidence type="ECO:0000250" key="1">
    <source>
        <dbReference type="UniProtKB" id="P38712"/>
    </source>
</evidence>
<evidence type="ECO:0000255" key="2">
    <source>
        <dbReference type="PROSITE-ProRule" id="PRU00541"/>
    </source>
</evidence>
<evidence type="ECO:0000255" key="3">
    <source>
        <dbReference type="PROSITE-ProRule" id="PRU00542"/>
    </source>
</evidence>
<evidence type="ECO:0000256" key="4">
    <source>
        <dbReference type="SAM" id="MobiDB-lite"/>
    </source>
</evidence>
<evidence type="ECO:0000305" key="5"/>
<dbReference type="EC" id="3.6.4.13" evidence="1"/>
<dbReference type="EMBL" id="CH445336">
    <property type="protein sequence ID" value="EAT84178.2"/>
    <property type="molecule type" value="Genomic_DNA"/>
</dbReference>
<dbReference type="RefSeq" id="XP_001798228.1">
    <property type="nucleotide sequence ID" value="XM_001798176.1"/>
</dbReference>
<dbReference type="SMR" id="Q0UK12"/>
<dbReference type="FunCoup" id="Q0UK12">
    <property type="interactions" value="1043"/>
</dbReference>
<dbReference type="STRING" id="321614.Q0UK12"/>
<dbReference type="EnsemblFungi" id="SNOT_07902">
    <property type="protein sequence ID" value="SNOT_07902"/>
    <property type="gene ID" value="SNOG_07902"/>
</dbReference>
<dbReference type="GeneID" id="5975126"/>
<dbReference type="KEGG" id="pno:SNOG_07902"/>
<dbReference type="VEuPathDB" id="FungiDB:JI435_079020"/>
<dbReference type="eggNOG" id="KOG0330">
    <property type="taxonomic scope" value="Eukaryota"/>
</dbReference>
<dbReference type="HOGENOM" id="CLU_003041_1_1_1"/>
<dbReference type="InParanoid" id="Q0UK12"/>
<dbReference type="OrthoDB" id="10261904at2759"/>
<dbReference type="Proteomes" id="UP000001055">
    <property type="component" value="Unassembled WGS sequence"/>
</dbReference>
<dbReference type="GO" id="GO:0005634">
    <property type="term" value="C:nucleus"/>
    <property type="evidence" value="ECO:0000318"/>
    <property type="project" value="GO_Central"/>
</dbReference>
<dbReference type="GO" id="GO:0005524">
    <property type="term" value="F:ATP binding"/>
    <property type="evidence" value="ECO:0007669"/>
    <property type="project" value="UniProtKB-KW"/>
</dbReference>
<dbReference type="GO" id="GO:0016887">
    <property type="term" value="F:ATP hydrolysis activity"/>
    <property type="evidence" value="ECO:0007669"/>
    <property type="project" value="RHEA"/>
</dbReference>
<dbReference type="GO" id="GO:0003723">
    <property type="term" value="F:RNA binding"/>
    <property type="evidence" value="ECO:0007669"/>
    <property type="project" value="UniProtKB-KW"/>
</dbReference>
<dbReference type="GO" id="GO:0003724">
    <property type="term" value="F:RNA helicase activity"/>
    <property type="evidence" value="ECO:0007669"/>
    <property type="project" value="UniProtKB-EC"/>
</dbReference>
<dbReference type="GO" id="GO:0006364">
    <property type="term" value="P:rRNA processing"/>
    <property type="evidence" value="ECO:0000318"/>
    <property type="project" value="GO_Central"/>
</dbReference>
<dbReference type="CDD" id="cd17954">
    <property type="entry name" value="DEADc_DDX47"/>
    <property type="match status" value="1"/>
</dbReference>
<dbReference type="CDD" id="cd18787">
    <property type="entry name" value="SF2_C_DEAD"/>
    <property type="match status" value="1"/>
</dbReference>
<dbReference type="Gene3D" id="3.40.50.300">
    <property type="entry name" value="P-loop containing nucleotide triphosphate hydrolases"/>
    <property type="match status" value="2"/>
</dbReference>
<dbReference type="InterPro" id="IPR044765">
    <property type="entry name" value="DDX47/Rrp3_DEADc"/>
</dbReference>
<dbReference type="InterPro" id="IPR011545">
    <property type="entry name" value="DEAD/DEAH_box_helicase_dom"/>
</dbReference>
<dbReference type="InterPro" id="IPR050079">
    <property type="entry name" value="DEAD_box_RNA_helicase"/>
</dbReference>
<dbReference type="InterPro" id="IPR014001">
    <property type="entry name" value="Helicase_ATP-bd"/>
</dbReference>
<dbReference type="InterPro" id="IPR001650">
    <property type="entry name" value="Helicase_C-like"/>
</dbReference>
<dbReference type="InterPro" id="IPR027417">
    <property type="entry name" value="P-loop_NTPase"/>
</dbReference>
<dbReference type="InterPro" id="IPR000629">
    <property type="entry name" value="RNA-helicase_DEAD-box_CS"/>
</dbReference>
<dbReference type="InterPro" id="IPR014014">
    <property type="entry name" value="RNA_helicase_DEAD_Q_motif"/>
</dbReference>
<dbReference type="PANTHER" id="PTHR47959">
    <property type="entry name" value="ATP-DEPENDENT RNA HELICASE RHLE-RELATED"/>
    <property type="match status" value="1"/>
</dbReference>
<dbReference type="PANTHER" id="PTHR47959:SF20">
    <property type="entry name" value="RNA HELICASE"/>
    <property type="match status" value="1"/>
</dbReference>
<dbReference type="Pfam" id="PF00270">
    <property type="entry name" value="DEAD"/>
    <property type="match status" value="1"/>
</dbReference>
<dbReference type="Pfam" id="PF00271">
    <property type="entry name" value="Helicase_C"/>
    <property type="match status" value="1"/>
</dbReference>
<dbReference type="SMART" id="SM00487">
    <property type="entry name" value="DEXDc"/>
    <property type="match status" value="1"/>
</dbReference>
<dbReference type="SMART" id="SM00490">
    <property type="entry name" value="HELICc"/>
    <property type="match status" value="1"/>
</dbReference>
<dbReference type="SUPFAM" id="SSF52540">
    <property type="entry name" value="P-loop containing nucleoside triphosphate hydrolases"/>
    <property type="match status" value="1"/>
</dbReference>
<dbReference type="PROSITE" id="PS00039">
    <property type="entry name" value="DEAD_ATP_HELICASE"/>
    <property type="match status" value="1"/>
</dbReference>
<dbReference type="PROSITE" id="PS51192">
    <property type="entry name" value="HELICASE_ATP_BIND_1"/>
    <property type="match status" value="1"/>
</dbReference>
<dbReference type="PROSITE" id="PS51194">
    <property type="entry name" value="HELICASE_CTER"/>
    <property type="match status" value="1"/>
</dbReference>
<dbReference type="PROSITE" id="PS51195">
    <property type="entry name" value="Q_MOTIF"/>
    <property type="match status" value="1"/>
</dbReference>
<comment type="function">
    <text evidence="1">ATP-dependent rRNA helicase required for pre-ribosomal RNA processing. Involved in the maturation of the 35S-pre-rRNA and to its cleavage to mature 18S rRNA.</text>
</comment>
<comment type="catalytic activity">
    <reaction evidence="1">
        <text>ATP + H2O = ADP + phosphate + H(+)</text>
        <dbReference type="Rhea" id="RHEA:13065"/>
        <dbReference type="ChEBI" id="CHEBI:15377"/>
        <dbReference type="ChEBI" id="CHEBI:15378"/>
        <dbReference type="ChEBI" id="CHEBI:30616"/>
        <dbReference type="ChEBI" id="CHEBI:43474"/>
        <dbReference type="ChEBI" id="CHEBI:456216"/>
        <dbReference type="EC" id="3.6.4.13"/>
    </reaction>
</comment>
<comment type="subunit">
    <text evidence="1">Interacts with the SSU processome.</text>
</comment>
<comment type="subcellular location">
    <subcellularLocation>
        <location evidence="5">Nucleus</location>
    </subcellularLocation>
</comment>
<comment type="domain">
    <text evidence="5">The Q motif is unique to and characteristic of the DEAD box family of RNA helicases and controls ATP binding and hydrolysis.</text>
</comment>
<comment type="similarity">
    <text evidence="5">Belongs to the DEAD box helicase family. DDX47/RRP3 subfamily.</text>
</comment>